<feature type="chain" id="PRO_0000423980" description="Immunity protein RhsIB">
    <location>
        <begin position="1"/>
        <end position="166"/>
    </location>
</feature>
<reference key="1">
    <citation type="journal article" date="2011" name="J. Bacteriol.">
        <title>Genome sequence of the plant-pathogenic bacterium Dickeya dadantii 3937.</title>
        <authorList>
            <person name="Glasner J.D."/>
            <person name="Yang C.H."/>
            <person name="Reverchon S."/>
            <person name="Hugouvieux-Cotte-Pattat N."/>
            <person name="Condemine G."/>
            <person name="Bohin J.P."/>
            <person name="Van Gijsegem F."/>
            <person name="Yang S."/>
            <person name="Franza T."/>
            <person name="Expert D."/>
            <person name="Plunkett G. III"/>
            <person name="San Francisco M.J."/>
            <person name="Charkowski A.O."/>
            <person name="Py B."/>
            <person name="Bell K."/>
            <person name="Rauscher L."/>
            <person name="Rodriguez-Palenzuela P."/>
            <person name="Toussaint A."/>
            <person name="Holeva M.C."/>
            <person name="He S.Y."/>
            <person name="Douet V."/>
            <person name="Boccara M."/>
            <person name="Blanco C."/>
            <person name="Toth I."/>
            <person name="Anderson B.D."/>
            <person name="Biehl B.S."/>
            <person name="Mau B."/>
            <person name="Flynn S.M."/>
            <person name="Barras F."/>
            <person name="Lindeberg M."/>
            <person name="Birch P.R."/>
            <person name="Tsuyumu S."/>
            <person name="Shi X."/>
            <person name="Hibbing M."/>
            <person name="Yap M.N."/>
            <person name="Carpentier M."/>
            <person name="Dassa E."/>
            <person name="Umehara M."/>
            <person name="Kim J.F."/>
            <person name="Rusch M."/>
            <person name="Soni P."/>
            <person name="Mayhew G.F."/>
            <person name="Fouts D.E."/>
            <person name="Gill S.R."/>
            <person name="Blattner F.R."/>
            <person name="Keen N.T."/>
            <person name="Perna N.T."/>
        </authorList>
    </citation>
    <scope>NUCLEOTIDE SEQUENCE [LARGE SCALE GENOMIC DNA]</scope>
    <source>
        <strain>3937</strain>
    </source>
</reference>
<reference key="2">
    <citation type="journal article" date="2013" name="Proc. Natl. Acad. Sci. U.S.A.">
        <title>Rhs proteins from diverse bacteria mediate intercellular competition.</title>
        <authorList>
            <person name="Koskiniemi S."/>
            <person name="Lamoureux J.G."/>
            <person name="Nikolakakis K.C."/>
            <person name="t'Kint de Roodenbeke C."/>
            <person name="Kaplan M.D."/>
            <person name="Low D.A."/>
            <person name="Hayes C.S."/>
        </authorList>
    </citation>
    <scope>FUNCTION AS AN IMMUNITY PROTEIN</scope>
    <scope>DISRUPTION PHENOTYPE</scope>
    <source>
        <strain>3937</strain>
    </source>
</reference>
<organism>
    <name type="scientific">Dickeya dadantii (strain 3937)</name>
    <name type="common">Erwinia chrysanthemi (strain 3937)</name>
    <dbReference type="NCBI Taxonomy" id="198628"/>
    <lineage>
        <taxon>Bacteria</taxon>
        <taxon>Pseudomonadati</taxon>
        <taxon>Pseudomonadota</taxon>
        <taxon>Gammaproteobacteria</taxon>
        <taxon>Enterobacterales</taxon>
        <taxon>Pectobacteriaceae</taxon>
        <taxon>Dickeya</taxon>
    </lineage>
</organism>
<evidence type="ECO:0000269" key="1">
    <source>
    </source>
</evidence>
<name>RHSIB_DICD3</name>
<comment type="function">
    <text evidence="1">Immunity component of a toxin-immunity protein module, which functions as a cellular contact-dependent growth inhibition (CDI) system. Specifically inhibits its cognate toxin RhsB. Cell contact is necessary for growth inhibition.</text>
</comment>
<comment type="disruption phenotype">
    <text evidence="1">A double rhsB-rhsIB deletion is outcompeted by wild-type cells, restoration of rhsIB restores normal growth in competition experiments. Restoration of growth requires the RhsB-specific immunity protein, rhsIA does not restore growth.</text>
</comment>
<protein>
    <recommendedName>
        <fullName>Immunity protein RhsIB</fullName>
    </recommendedName>
</protein>
<dbReference type="EMBL" id="CP002038">
    <property type="protein sequence ID" value="ADM99130.1"/>
    <property type="molecule type" value="Genomic_DNA"/>
</dbReference>
<dbReference type="RefSeq" id="WP_013318568.1">
    <property type="nucleotide sequence ID" value="NC_014500.1"/>
</dbReference>
<dbReference type="STRING" id="198628.Dda3937_04645"/>
<dbReference type="KEGG" id="ddd:Dda3937_04645"/>
<dbReference type="eggNOG" id="ENOG5030880">
    <property type="taxonomic scope" value="Bacteria"/>
</dbReference>
<dbReference type="HOGENOM" id="CLU_1600094_0_0_6"/>
<dbReference type="OrthoDB" id="6424941at2"/>
<dbReference type="Proteomes" id="UP000006859">
    <property type="component" value="Chromosome"/>
</dbReference>
<dbReference type="Gene3D" id="3.40.1580.10">
    <property type="entry name" value="SMI1/KNR4-like"/>
    <property type="match status" value="1"/>
</dbReference>
<dbReference type="InterPro" id="IPR037883">
    <property type="entry name" value="Knr4/Smi1-like_sf"/>
</dbReference>
<dbReference type="SUPFAM" id="SSF160631">
    <property type="entry name" value="SMI1/KNR4-like"/>
    <property type="match status" value="1"/>
</dbReference>
<gene>
    <name type="primary">rhsIB</name>
    <name type="ordered locus">Dda3937_04645</name>
</gene>
<sequence length="166" mass="19307">MNIENAYDQLNAWINTSNGSYIDIGGERYSFSRLKTITKDELSNFESDNNLKLPNDYKSFLINVGCVNIFVGEKTAGIEIIPPTDIRNFSKSVFYNFGDDLYPRLLLTTSIPKLGYFGGFWMESESKENYGIFYPDIPPELWIEECDFIKFDDWLIKLVKYKSRKI</sequence>
<keyword id="KW-1185">Reference proteome</keyword>
<proteinExistence type="evidence at protein level"/>
<accession>E0SIS1</accession>